<reference key="1">
    <citation type="journal article" date="1995" name="Science">
        <title>Whole-genome random sequencing and assembly of Haemophilus influenzae Rd.</title>
        <authorList>
            <person name="Fleischmann R.D."/>
            <person name="Adams M.D."/>
            <person name="White O."/>
            <person name="Clayton R.A."/>
            <person name="Kirkness E.F."/>
            <person name="Kerlavage A.R."/>
            <person name="Bult C.J."/>
            <person name="Tomb J.-F."/>
            <person name="Dougherty B.A."/>
            <person name="Merrick J.M."/>
            <person name="McKenney K."/>
            <person name="Sutton G.G."/>
            <person name="FitzHugh W."/>
            <person name="Fields C.A."/>
            <person name="Gocayne J.D."/>
            <person name="Scott J.D."/>
            <person name="Shirley R."/>
            <person name="Liu L.-I."/>
            <person name="Glodek A."/>
            <person name="Kelley J.M."/>
            <person name="Weidman J.F."/>
            <person name="Phillips C.A."/>
            <person name="Spriggs T."/>
            <person name="Hedblom E."/>
            <person name="Cotton M.D."/>
            <person name="Utterback T.R."/>
            <person name="Hanna M.C."/>
            <person name="Nguyen D.T."/>
            <person name="Saudek D.M."/>
            <person name="Brandon R.C."/>
            <person name="Fine L.D."/>
            <person name="Fritchman J.L."/>
            <person name="Fuhrmann J.L."/>
            <person name="Geoghagen N.S.M."/>
            <person name="Gnehm C.L."/>
            <person name="McDonald L.A."/>
            <person name="Small K.V."/>
            <person name="Fraser C.M."/>
            <person name="Smith H.O."/>
            <person name="Venter J.C."/>
        </authorList>
    </citation>
    <scope>NUCLEOTIDE SEQUENCE [LARGE SCALE GENOMIC DNA]</scope>
    <source>
        <strain>ATCC 51907 / DSM 11121 / KW20 / Rd</strain>
    </source>
</reference>
<comment type="subcellular location">
    <subcellularLocation>
        <location evidence="2">Cell membrane</location>
        <topology evidence="2">Multi-pass membrane protein</topology>
    </subcellularLocation>
</comment>
<proteinExistence type="predicted"/>
<organism>
    <name type="scientific">Haemophilus influenzae (strain ATCC 51907 / DSM 11121 / KW20 / Rd)</name>
    <dbReference type="NCBI Taxonomy" id="71421"/>
    <lineage>
        <taxon>Bacteria</taxon>
        <taxon>Pseudomonadati</taxon>
        <taxon>Pseudomonadota</taxon>
        <taxon>Gammaproteobacteria</taxon>
        <taxon>Pasteurellales</taxon>
        <taxon>Pasteurellaceae</taxon>
        <taxon>Haemophilus</taxon>
    </lineage>
</organism>
<evidence type="ECO:0000255" key="1"/>
<evidence type="ECO:0000305" key="2"/>
<gene>
    <name type="ordered locus">HI_1620</name>
</gene>
<sequence length="167" mass="19490">MKIHHLFQPHFRLIYLFIWGLIISGLSDLTWLIPLNVLAVSLFFISLQFSQKSFLPYLKRWFALVIFIVLMWATLSWKIGENGIELNFQGIELAEKLSLRTHLLLISLWLFLWNINDAVLVPSHWQIAFARKINSTFCADRTLHCTAWRIASKNGYCHARSWISSSA</sequence>
<accession>P44273</accession>
<name>Y1620_HAEIN</name>
<protein>
    <recommendedName>
        <fullName>Uncharacterized protein HI_1620</fullName>
    </recommendedName>
</protein>
<dbReference type="EMBL" id="L42023">
    <property type="protein sequence ID" value="AAC23270.1"/>
    <property type="molecule type" value="Genomic_DNA"/>
</dbReference>
<dbReference type="PIR" id="D64038">
    <property type="entry name" value="D64038"/>
</dbReference>
<dbReference type="STRING" id="71421.HI_1620"/>
<dbReference type="EnsemblBacteria" id="AAC23270">
    <property type="protein sequence ID" value="AAC23270"/>
    <property type="gene ID" value="HI_1620"/>
</dbReference>
<dbReference type="KEGG" id="hin:HI_1620"/>
<dbReference type="eggNOG" id="COG0619">
    <property type="taxonomic scope" value="Bacteria"/>
</dbReference>
<dbReference type="HOGENOM" id="CLU_1592257_0_0_6"/>
<dbReference type="Proteomes" id="UP000000579">
    <property type="component" value="Chromosome"/>
</dbReference>
<dbReference type="GO" id="GO:0005886">
    <property type="term" value="C:plasma membrane"/>
    <property type="evidence" value="ECO:0007669"/>
    <property type="project" value="UniProtKB-SubCell"/>
</dbReference>
<keyword id="KW-1003">Cell membrane</keyword>
<keyword id="KW-0472">Membrane</keyword>
<keyword id="KW-1185">Reference proteome</keyword>
<keyword id="KW-0812">Transmembrane</keyword>
<keyword id="KW-1133">Transmembrane helix</keyword>
<feature type="chain" id="PRO_0000078099" description="Uncharacterized protein HI_1620">
    <location>
        <begin position="1"/>
        <end position="167"/>
    </location>
</feature>
<feature type="transmembrane region" description="Helical" evidence="1">
    <location>
        <begin position="13"/>
        <end position="33"/>
    </location>
</feature>
<feature type="transmembrane region" description="Helical" evidence="1">
    <location>
        <begin position="37"/>
        <end position="57"/>
    </location>
</feature>
<feature type="transmembrane region" description="Helical" evidence="1">
    <location>
        <begin position="61"/>
        <end position="81"/>
    </location>
</feature>
<feature type="transmembrane region" description="Helical" evidence="1">
    <location>
        <begin position="103"/>
        <end position="123"/>
    </location>
</feature>